<reference key="1">
    <citation type="journal article" date="2009" name="Proc. Natl. Acad. Sci. U.S.A.">
        <title>Eukaryote-to-eukaryote gene transfer events revealed by the genome sequence of the wine yeast Saccharomyces cerevisiae EC1118.</title>
        <authorList>
            <person name="Novo M."/>
            <person name="Bigey F."/>
            <person name="Beyne E."/>
            <person name="Galeote V."/>
            <person name="Gavory F."/>
            <person name="Mallet S."/>
            <person name="Cambon B."/>
            <person name="Legras J.-L."/>
            <person name="Wincker P."/>
            <person name="Casaregola S."/>
            <person name="Dequin S."/>
        </authorList>
    </citation>
    <scope>NUCLEOTIDE SEQUENCE [LARGE SCALE GENOMIC DNA]</scope>
    <source>
        <strain>Lalvin EC1118 / Prise de mousse</strain>
    </source>
</reference>
<organism>
    <name type="scientific">Saccharomyces cerevisiae (strain Lalvin EC1118 / Prise de mousse)</name>
    <name type="common">Baker's yeast</name>
    <dbReference type="NCBI Taxonomy" id="643680"/>
    <lineage>
        <taxon>Eukaryota</taxon>
        <taxon>Fungi</taxon>
        <taxon>Dikarya</taxon>
        <taxon>Ascomycota</taxon>
        <taxon>Saccharomycotina</taxon>
        <taxon>Saccharomycetes</taxon>
        <taxon>Saccharomycetales</taxon>
        <taxon>Saccharomycetaceae</taxon>
        <taxon>Saccharomyces</taxon>
    </lineage>
</organism>
<keyword id="KW-0012">Acyltransferase</keyword>
<keyword id="KW-0028">Amino-acid biosynthesis</keyword>
<keyword id="KW-0055">Arginine biosynthesis</keyword>
<keyword id="KW-0068">Autocatalytic cleavage</keyword>
<keyword id="KW-0496">Mitochondrion</keyword>
<keyword id="KW-0511">Multifunctional enzyme</keyword>
<keyword id="KW-0808">Transferase</keyword>
<keyword id="KW-0809">Transit peptide</keyword>
<sequence length="441" mass="47821">MRISSTLLQRSKQLIDKYALYVPKTGSFPKGFEVGYTASGVKKNGSLDLGVILNTNKSRPSTAAAVFTTNKFKAAPVLTSKKVLETARGKNINAIVVNSGCANSVTGDLGMKDAQVMIDLVNDKIGQKNSTLVMSTGVIGQRLQMDKISTGINKIFGEEKFGSDFNSWLNVAKSICTTDTFPKLVTSRFKLPSGTEYTLTGMAKGAGMICPNMATLLGFIVTDLPIESKALQKMLTFATTRSFNCISVDGDMSTNDTICMLANGAIDTKEINEDSKDFEQVKLQATEFAQRLAQLVVRDGEGSTKFVTVNVKNALHFEDAKIIAESISNSMLVKTALYGQDANWGRILCAIGYAKLNDLKSLDVNKINVSFIATDNSEPRELKLVANGVPQLEIDETRASEILALNDLEVSVDLGTGDQAAQFWTCDLSHEYVTINGDYRS</sequence>
<evidence type="ECO:0000255" key="1">
    <source>
        <dbReference type="HAMAP-Rule" id="MF_03124"/>
    </source>
</evidence>
<comment type="function">
    <text evidence="1">Catalyzes two activities which are involved in the cyclic version of arginine biosynthesis: the synthesis of acetylglutamate from glutamate and acetyl-CoA, and of ornithine by transacetylation between acetylornithine and glutamate.</text>
</comment>
<comment type="catalytic activity">
    <reaction evidence="1">
        <text>N(2)-acetyl-L-ornithine + L-glutamate = N-acetyl-L-glutamate + L-ornithine</text>
        <dbReference type="Rhea" id="RHEA:15349"/>
        <dbReference type="ChEBI" id="CHEBI:29985"/>
        <dbReference type="ChEBI" id="CHEBI:44337"/>
        <dbReference type="ChEBI" id="CHEBI:46911"/>
        <dbReference type="ChEBI" id="CHEBI:57805"/>
        <dbReference type="EC" id="2.3.1.35"/>
    </reaction>
</comment>
<comment type="catalytic activity">
    <reaction evidence="1">
        <text>L-glutamate + acetyl-CoA = N-acetyl-L-glutamate + CoA + H(+)</text>
        <dbReference type="Rhea" id="RHEA:24292"/>
        <dbReference type="ChEBI" id="CHEBI:15378"/>
        <dbReference type="ChEBI" id="CHEBI:29985"/>
        <dbReference type="ChEBI" id="CHEBI:44337"/>
        <dbReference type="ChEBI" id="CHEBI:57287"/>
        <dbReference type="ChEBI" id="CHEBI:57288"/>
        <dbReference type="EC" id="2.3.1.1"/>
    </reaction>
</comment>
<comment type="pathway">
    <text evidence="1">Amino-acid biosynthesis; L-arginine biosynthesis; L-ornithine and N-acetyl-L-glutamate from L-glutamate and N(2)-acetyl-L-ornithine (cyclic): step 1/1.</text>
</comment>
<comment type="pathway">
    <text evidence="1">Amino-acid biosynthesis; L-arginine biosynthesis; N(2)-acetyl-L-ornithine from L-glutamate: step 1/4.</text>
</comment>
<comment type="subunit">
    <text evidence="1">Heterodimer of an alpha and a beta chain.</text>
</comment>
<comment type="subcellular location">
    <subcellularLocation>
        <location evidence="1">Mitochondrion matrix</location>
    </subcellularLocation>
</comment>
<comment type="PTM">
    <text evidence="1">The alpha and beta chains are autoproteolytically processed from a single precursor protein within the mitochondrion.</text>
</comment>
<comment type="similarity">
    <text evidence="1">Belongs to the ArgJ family.</text>
</comment>
<name>ARGJ_YEAS8</name>
<dbReference type="EC" id="2.3.1.35" evidence="1"/>
<dbReference type="EC" id="2.3.1.1" evidence="1"/>
<dbReference type="EMBL" id="FN393082">
    <property type="protein sequence ID" value="CAY81880.1"/>
    <property type="molecule type" value="Genomic_DNA"/>
</dbReference>
<dbReference type="SMR" id="C8ZER4"/>
<dbReference type="MEROPS" id="T05.001"/>
<dbReference type="HOGENOM" id="CLU_027172_1_0_1"/>
<dbReference type="OrthoDB" id="21522at4893"/>
<dbReference type="UniPathway" id="UPA00068">
    <property type="reaction ID" value="UER00106"/>
</dbReference>
<dbReference type="UniPathway" id="UPA00068">
    <property type="reaction ID" value="UER00111"/>
</dbReference>
<dbReference type="Proteomes" id="UP000000286">
    <property type="component" value="Chromosome XIII, Scaffold EC1118_1M3"/>
</dbReference>
<dbReference type="GO" id="GO:0005759">
    <property type="term" value="C:mitochondrial matrix"/>
    <property type="evidence" value="ECO:0007669"/>
    <property type="project" value="UniProtKB-SubCell"/>
</dbReference>
<dbReference type="GO" id="GO:0004358">
    <property type="term" value="F:glutamate N-acetyltransferase activity"/>
    <property type="evidence" value="ECO:0007669"/>
    <property type="project" value="UniProtKB-UniRule"/>
</dbReference>
<dbReference type="GO" id="GO:0004042">
    <property type="term" value="F:L-glutamate N-acetyltransferase activity"/>
    <property type="evidence" value="ECO:0007669"/>
    <property type="project" value="UniProtKB-UniRule"/>
</dbReference>
<dbReference type="GO" id="GO:0006526">
    <property type="term" value="P:L-arginine biosynthetic process"/>
    <property type="evidence" value="ECO:0007669"/>
    <property type="project" value="UniProtKB-UniRule"/>
</dbReference>
<dbReference type="GO" id="GO:0006592">
    <property type="term" value="P:ornithine biosynthetic process"/>
    <property type="evidence" value="ECO:0007669"/>
    <property type="project" value="TreeGrafter"/>
</dbReference>
<dbReference type="CDD" id="cd02152">
    <property type="entry name" value="OAT"/>
    <property type="match status" value="1"/>
</dbReference>
<dbReference type="FunFam" id="3.10.20.340:FF:000002">
    <property type="entry name" value="Arginine biosynthesis bifunctional protein ArgJ, mitochondrial"/>
    <property type="match status" value="1"/>
</dbReference>
<dbReference type="FunFam" id="3.30.2330.10:FF:000001">
    <property type="entry name" value="Arginine biosynthesis bifunctional protein ArgJ, mitochondrial"/>
    <property type="match status" value="1"/>
</dbReference>
<dbReference type="FunFam" id="3.60.70.12:FF:000002">
    <property type="entry name" value="Arginine biosynthesis bifunctional protein ArgJ, mitochondrial"/>
    <property type="match status" value="1"/>
</dbReference>
<dbReference type="Gene3D" id="3.30.2330.10">
    <property type="entry name" value="arginine biosynthesis bifunctional protein suprefamily"/>
    <property type="match status" value="1"/>
</dbReference>
<dbReference type="Gene3D" id="3.10.20.340">
    <property type="entry name" value="ArgJ beta chain, C-terminal domain"/>
    <property type="match status" value="1"/>
</dbReference>
<dbReference type="Gene3D" id="3.60.70.12">
    <property type="entry name" value="L-amino peptidase D-ALA esterase/amidase"/>
    <property type="match status" value="1"/>
</dbReference>
<dbReference type="HAMAP" id="MF_01106">
    <property type="entry name" value="ArgJ"/>
    <property type="match status" value="1"/>
</dbReference>
<dbReference type="InterPro" id="IPR002813">
    <property type="entry name" value="Arg_biosynth_ArgJ"/>
</dbReference>
<dbReference type="InterPro" id="IPR016117">
    <property type="entry name" value="ArgJ-like_dom_sf"/>
</dbReference>
<dbReference type="InterPro" id="IPR042195">
    <property type="entry name" value="ArgJ_beta_C"/>
</dbReference>
<dbReference type="NCBIfam" id="TIGR00120">
    <property type="entry name" value="ArgJ"/>
    <property type="match status" value="1"/>
</dbReference>
<dbReference type="NCBIfam" id="NF003802">
    <property type="entry name" value="PRK05388.1"/>
    <property type="match status" value="1"/>
</dbReference>
<dbReference type="PANTHER" id="PTHR23100">
    <property type="entry name" value="ARGININE BIOSYNTHESIS BIFUNCTIONAL PROTEIN ARGJ"/>
    <property type="match status" value="1"/>
</dbReference>
<dbReference type="PANTHER" id="PTHR23100:SF0">
    <property type="entry name" value="ARGININE BIOSYNTHESIS BIFUNCTIONAL PROTEIN ARGJ, MITOCHONDRIAL"/>
    <property type="match status" value="1"/>
</dbReference>
<dbReference type="Pfam" id="PF01960">
    <property type="entry name" value="ArgJ"/>
    <property type="match status" value="1"/>
</dbReference>
<dbReference type="SUPFAM" id="SSF56266">
    <property type="entry name" value="DmpA/ArgJ-like"/>
    <property type="match status" value="1"/>
</dbReference>
<accession>C8ZER4</accession>
<proteinExistence type="inferred from homology"/>
<feature type="transit peptide" description="Mitochondrion" evidence="1">
    <location>
        <begin position="1"/>
        <end position="8"/>
    </location>
</feature>
<feature type="chain" id="PRO_0000398100" description="Arginine biosynthesis bifunctional protein ArgJ alpha chain" evidence="1">
    <location>
        <begin position="9"/>
        <end position="214"/>
    </location>
</feature>
<feature type="chain" id="PRO_0000398101" description="Arginine biosynthesis bifunctional protein ArgJ beta chain" evidence="1">
    <location>
        <begin position="215"/>
        <end position="441"/>
    </location>
</feature>
<feature type="active site" description="Nucleophile" evidence="1">
    <location>
        <position position="215"/>
    </location>
</feature>
<feature type="binding site" evidence="1">
    <location>
        <position position="177"/>
    </location>
    <ligand>
        <name>substrate</name>
    </ligand>
</feature>
<feature type="binding site" evidence="1">
    <location>
        <position position="204"/>
    </location>
    <ligand>
        <name>substrate</name>
    </ligand>
</feature>
<feature type="binding site" evidence="1">
    <location>
        <position position="215"/>
    </location>
    <ligand>
        <name>substrate</name>
    </ligand>
</feature>
<feature type="binding site" evidence="1">
    <location>
        <position position="301"/>
    </location>
    <ligand>
        <name>substrate</name>
    </ligand>
</feature>
<feature type="binding site" evidence="1">
    <location>
        <position position="436"/>
    </location>
    <ligand>
        <name>substrate</name>
    </ligand>
</feature>
<feature type="binding site" evidence="1">
    <location>
        <position position="441"/>
    </location>
    <ligand>
        <name>substrate</name>
    </ligand>
</feature>
<feature type="site" description="Involved in the stabilization of negative charge on the oxyanion by the formation of the oxyanion hole" evidence="1">
    <location>
        <position position="136"/>
    </location>
</feature>
<feature type="site" description="Involved in the stabilization of negative charge on the oxyanion by the formation of the oxyanion hole" evidence="1">
    <location>
        <position position="137"/>
    </location>
</feature>
<feature type="site" description="Cleavage; by autolysis" evidence="1">
    <location>
        <begin position="214"/>
        <end position="215"/>
    </location>
</feature>
<gene>
    <name evidence="1" type="primary">ARG7</name>
    <name type="ORF">EC1118_1M3_2267g</name>
</gene>
<protein>
    <recommendedName>
        <fullName evidence="1">Arginine biosynthesis bifunctional protein ArgJ, mitochondrial</fullName>
    </recommendedName>
    <domain>
        <recommendedName>
            <fullName evidence="1">Glutamate N-acetyltransferase</fullName>
            <shortName evidence="1">GAT</shortName>
            <ecNumber evidence="1">2.3.1.35</ecNumber>
        </recommendedName>
        <alternativeName>
            <fullName evidence="1">Ornithine acetyltransferase</fullName>
            <shortName evidence="1">OATase</shortName>
        </alternativeName>
        <alternativeName>
            <fullName evidence="1">Ornithine transacetylase</fullName>
        </alternativeName>
    </domain>
    <domain>
        <recommendedName>
            <fullName evidence="1">Amino-acid acetyltransferase</fullName>
            <ecNumber evidence="1">2.3.1.1</ecNumber>
        </recommendedName>
        <alternativeName>
            <fullName evidence="1">N-acetylglutamate synthase</fullName>
            <shortName evidence="1">AGS</shortName>
        </alternativeName>
    </domain>
    <component>
        <recommendedName>
            <fullName evidence="1">Arginine biosynthesis bifunctional protein ArgJ alpha chain</fullName>
        </recommendedName>
    </component>
    <component>
        <recommendedName>
            <fullName evidence="1">Arginine biosynthesis bifunctional protein ArgJ beta chain</fullName>
        </recommendedName>
    </component>
</protein>